<evidence type="ECO:0000255" key="1">
    <source>
        <dbReference type="HAMAP-Rule" id="MF_00549"/>
    </source>
</evidence>
<accession>A9R2N5</accession>
<dbReference type="EC" id="4.2.3.3" evidence="1"/>
<dbReference type="EMBL" id="CP000901">
    <property type="protein sequence ID" value="ABX86609.1"/>
    <property type="molecule type" value="Genomic_DNA"/>
</dbReference>
<dbReference type="RefSeq" id="WP_002213060.1">
    <property type="nucleotide sequence ID" value="NZ_CP009935.1"/>
</dbReference>
<dbReference type="SMR" id="A9R2N5"/>
<dbReference type="KEGG" id="ypg:YpAngola_A3205"/>
<dbReference type="PATRIC" id="fig|349746.12.peg.4266"/>
<dbReference type="GO" id="GO:0005829">
    <property type="term" value="C:cytosol"/>
    <property type="evidence" value="ECO:0007669"/>
    <property type="project" value="TreeGrafter"/>
</dbReference>
<dbReference type="GO" id="GO:0008929">
    <property type="term" value="F:methylglyoxal synthase activity"/>
    <property type="evidence" value="ECO:0007669"/>
    <property type="project" value="UniProtKB-UniRule"/>
</dbReference>
<dbReference type="GO" id="GO:0019242">
    <property type="term" value="P:methylglyoxal biosynthetic process"/>
    <property type="evidence" value="ECO:0007669"/>
    <property type="project" value="UniProtKB-UniRule"/>
</dbReference>
<dbReference type="CDD" id="cd01422">
    <property type="entry name" value="MGS"/>
    <property type="match status" value="1"/>
</dbReference>
<dbReference type="FunFam" id="3.40.50.1380:FF:000002">
    <property type="entry name" value="Methylglyoxal synthase"/>
    <property type="match status" value="1"/>
</dbReference>
<dbReference type="Gene3D" id="3.40.50.1380">
    <property type="entry name" value="Methylglyoxal synthase-like domain"/>
    <property type="match status" value="1"/>
</dbReference>
<dbReference type="HAMAP" id="MF_00549">
    <property type="entry name" value="Methylglyoxal_synth"/>
    <property type="match status" value="1"/>
</dbReference>
<dbReference type="InterPro" id="IPR004363">
    <property type="entry name" value="Methylgl_synth"/>
</dbReference>
<dbReference type="InterPro" id="IPR018148">
    <property type="entry name" value="Methylglyoxal_synth_AS"/>
</dbReference>
<dbReference type="InterPro" id="IPR011607">
    <property type="entry name" value="MGS-like_dom"/>
</dbReference>
<dbReference type="InterPro" id="IPR036914">
    <property type="entry name" value="MGS-like_dom_sf"/>
</dbReference>
<dbReference type="NCBIfam" id="TIGR00160">
    <property type="entry name" value="MGSA"/>
    <property type="match status" value="1"/>
</dbReference>
<dbReference type="NCBIfam" id="NF003559">
    <property type="entry name" value="PRK05234.1"/>
    <property type="match status" value="1"/>
</dbReference>
<dbReference type="PANTHER" id="PTHR30492">
    <property type="entry name" value="METHYLGLYOXAL SYNTHASE"/>
    <property type="match status" value="1"/>
</dbReference>
<dbReference type="PANTHER" id="PTHR30492:SF0">
    <property type="entry name" value="METHYLGLYOXAL SYNTHASE"/>
    <property type="match status" value="1"/>
</dbReference>
<dbReference type="Pfam" id="PF02142">
    <property type="entry name" value="MGS"/>
    <property type="match status" value="1"/>
</dbReference>
<dbReference type="PIRSF" id="PIRSF006614">
    <property type="entry name" value="Methylglyox_syn"/>
    <property type="match status" value="1"/>
</dbReference>
<dbReference type="SMART" id="SM00851">
    <property type="entry name" value="MGS"/>
    <property type="match status" value="1"/>
</dbReference>
<dbReference type="SUPFAM" id="SSF52335">
    <property type="entry name" value="Methylglyoxal synthase-like"/>
    <property type="match status" value="1"/>
</dbReference>
<dbReference type="PROSITE" id="PS01335">
    <property type="entry name" value="METHYLGLYOXAL_SYNTH"/>
    <property type="match status" value="1"/>
</dbReference>
<dbReference type="PROSITE" id="PS51855">
    <property type="entry name" value="MGS"/>
    <property type="match status" value="1"/>
</dbReference>
<protein>
    <recommendedName>
        <fullName evidence="1">Methylglyoxal synthase</fullName>
        <shortName evidence="1">MGS</shortName>
        <ecNumber evidence="1">4.2.3.3</ecNumber>
    </recommendedName>
</protein>
<gene>
    <name evidence="1" type="primary">mgsA</name>
    <name type="ordered locus">YpAngola_A3205</name>
</gene>
<name>MGSA_YERPG</name>
<reference key="1">
    <citation type="journal article" date="2010" name="J. Bacteriol.">
        <title>Genome sequence of the deep-rooted Yersinia pestis strain Angola reveals new insights into the evolution and pangenome of the plague bacterium.</title>
        <authorList>
            <person name="Eppinger M."/>
            <person name="Worsham P.L."/>
            <person name="Nikolich M.P."/>
            <person name="Riley D.R."/>
            <person name="Sebastian Y."/>
            <person name="Mou S."/>
            <person name="Achtman M."/>
            <person name="Lindler L.E."/>
            <person name="Ravel J."/>
        </authorList>
    </citation>
    <scope>NUCLEOTIDE SEQUENCE [LARGE SCALE GENOMIC DNA]</scope>
    <source>
        <strain>Angola</strain>
    </source>
</reference>
<proteinExistence type="inferred from homology"/>
<comment type="function">
    <text evidence="1">Catalyzes the formation of methylglyoxal from dihydroxyacetone phosphate.</text>
</comment>
<comment type="catalytic activity">
    <reaction evidence="1">
        <text>dihydroxyacetone phosphate = methylglyoxal + phosphate</text>
        <dbReference type="Rhea" id="RHEA:17937"/>
        <dbReference type="ChEBI" id="CHEBI:17158"/>
        <dbReference type="ChEBI" id="CHEBI:43474"/>
        <dbReference type="ChEBI" id="CHEBI:57642"/>
        <dbReference type="EC" id="4.2.3.3"/>
    </reaction>
</comment>
<comment type="similarity">
    <text evidence="1">Belongs to the methylglyoxal synthase family.</text>
</comment>
<keyword id="KW-0456">Lyase</keyword>
<sequence length="154" mass="17138">MELTTRTIAARKHIALVSHDHCKKSLLAWVMENRDLLAQHELYATGTTGNLVQKATGIDVHCLLSGPMGGDQEVGALISEKKIDILIFFWDPLNAVPHDPDVKALLRLATVWNIPVATNRSTADFLIGSTLFSSEVTIAIPDYDRYMQQRLDLK</sequence>
<feature type="chain" id="PRO_1000129015" description="Methylglyoxal synthase">
    <location>
        <begin position="1"/>
        <end position="154"/>
    </location>
</feature>
<feature type="domain" description="MGS-like" evidence="1">
    <location>
        <begin position="1"/>
        <end position="154"/>
    </location>
</feature>
<feature type="active site" description="Proton donor/acceptor" evidence="1">
    <location>
        <position position="71"/>
    </location>
</feature>
<feature type="binding site" evidence="1">
    <location>
        <position position="19"/>
    </location>
    <ligand>
        <name>substrate</name>
    </ligand>
</feature>
<feature type="binding site" evidence="1">
    <location>
        <position position="23"/>
    </location>
    <ligand>
        <name>substrate</name>
    </ligand>
</feature>
<feature type="binding site" evidence="1">
    <location>
        <begin position="45"/>
        <end position="48"/>
    </location>
    <ligand>
        <name>substrate</name>
    </ligand>
</feature>
<feature type="binding site" evidence="1">
    <location>
        <begin position="65"/>
        <end position="66"/>
    </location>
    <ligand>
        <name>substrate</name>
    </ligand>
</feature>
<feature type="binding site" evidence="1">
    <location>
        <position position="98"/>
    </location>
    <ligand>
        <name>substrate</name>
    </ligand>
</feature>
<organism>
    <name type="scientific">Yersinia pestis bv. Antiqua (strain Angola)</name>
    <dbReference type="NCBI Taxonomy" id="349746"/>
    <lineage>
        <taxon>Bacteria</taxon>
        <taxon>Pseudomonadati</taxon>
        <taxon>Pseudomonadota</taxon>
        <taxon>Gammaproteobacteria</taxon>
        <taxon>Enterobacterales</taxon>
        <taxon>Yersiniaceae</taxon>
        <taxon>Yersinia</taxon>
    </lineage>
</organism>